<comment type="function">
    <text evidence="1">Binds 16S rRNA, required for the assembly of 30S particles and may also be responsible for determining the conformation of the 16S rRNA at the A site.</text>
</comment>
<comment type="subunit">
    <text evidence="1">Part of the 30S ribosomal subunit. Contacts proteins S3 and S10.</text>
</comment>
<comment type="similarity">
    <text evidence="1">Belongs to the universal ribosomal protein uS14 family.</text>
</comment>
<organism>
    <name type="scientific">Afipia carboxidovorans (strain ATCC 49405 / DSM 1227 / KCTC 32145 / OM5)</name>
    <name type="common">Oligotropha carboxidovorans</name>
    <dbReference type="NCBI Taxonomy" id="504832"/>
    <lineage>
        <taxon>Bacteria</taxon>
        <taxon>Pseudomonadati</taxon>
        <taxon>Pseudomonadota</taxon>
        <taxon>Alphaproteobacteria</taxon>
        <taxon>Hyphomicrobiales</taxon>
        <taxon>Nitrobacteraceae</taxon>
        <taxon>Afipia</taxon>
    </lineage>
</organism>
<name>RS14_AFIC5</name>
<feature type="chain" id="PRO_1000128474" description="Small ribosomal subunit protein uS14">
    <location>
        <begin position="1"/>
        <end position="101"/>
    </location>
</feature>
<feature type="region of interest" description="Disordered" evidence="2">
    <location>
        <begin position="1"/>
        <end position="22"/>
    </location>
</feature>
<feature type="compositionally biased region" description="Basic and acidic residues" evidence="2">
    <location>
        <begin position="1"/>
        <end position="11"/>
    </location>
</feature>
<feature type="compositionally biased region" description="Basic residues" evidence="2">
    <location>
        <begin position="12"/>
        <end position="22"/>
    </location>
</feature>
<keyword id="KW-1185">Reference proteome</keyword>
<keyword id="KW-0687">Ribonucleoprotein</keyword>
<keyword id="KW-0689">Ribosomal protein</keyword>
<keyword id="KW-0694">RNA-binding</keyword>
<keyword id="KW-0699">rRNA-binding</keyword>
<gene>
    <name evidence="1" type="primary">rpsN</name>
    <name type="ordered locus">OCAR_5690</name>
    <name type="ordered locus">OCA5_c23170</name>
</gene>
<protein>
    <recommendedName>
        <fullName evidence="1">Small ribosomal subunit protein uS14</fullName>
    </recommendedName>
    <alternativeName>
        <fullName evidence="3">30S ribosomal protein S14</fullName>
    </alternativeName>
</protein>
<sequence length="101" mass="11503">MAKKSSVEKNNRRQRMVKNAAAKRARLKAIIADKTKPMEERFAATMKLAEMPRNSSATRIKNRCEISGRPHSVYRKTKMSRIAIRDFGSRGLIPGLVKSSW</sequence>
<reference key="1">
    <citation type="journal article" date="2008" name="J. Bacteriol.">
        <title>Genome sequence of the chemolithoautotrophic bacterium Oligotropha carboxidovorans OM5T.</title>
        <authorList>
            <person name="Paul D."/>
            <person name="Bridges S."/>
            <person name="Burgess S.C."/>
            <person name="Dandass Y."/>
            <person name="Lawrence M.L."/>
        </authorList>
    </citation>
    <scope>NUCLEOTIDE SEQUENCE [LARGE SCALE GENOMIC DNA]</scope>
    <source>
        <strain>ATCC 49405 / DSM 1227 / KCTC 32145 / OM5</strain>
    </source>
</reference>
<reference key="2">
    <citation type="journal article" date="2011" name="J. Bacteriol.">
        <title>Complete genome sequences of the chemolithoautotrophic Oligotropha carboxidovorans strains OM4 and OM5.</title>
        <authorList>
            <person name="Volland S."/>
            <person name="Rachinger M."/>
            <person name="Strittmatter A."/>
            <person name="Daniel R."/>
            <person name="Gottschalk G."/>
            <person name="Meyer O."/>
        </authorList>
    </citation>
    <scope>NUCLEOTIDE SEQUENCE [LARGE SCALE GENOMIC DNA]</scope>
    <source>
        <strain>ATCC 49405 / DSM 1227 / KCTC 32145 / OM5</strain>
    </source>
</reference>
<dbReference type="EMBL" id="CP001196">
    <property type="protein sequence ID" value="ACI92818.1"/>
    <property type="molecule type" value="Genomic_DNA"/>
</dbReference>
<dbReference type="EMBL" id="CP002826">
    <property type="protein sequence ID" value="AEI07017.1"/>
    <property type="molecule type" value="Genomic_DNA"/>
</dbReference>
<dbReference type="RefSeq" id="WP_012562847.1">
    <property type="nucleotide sequence ID" value="NC_015684.1"/>
</dbReference>
<dbReference type="SMR" id="B6JEX8"/>
<dbReference type="STRING" id="504832.OCA5_c23170"/>
<dbReference type="KEGG" id="oca:OCAR_5690"/>
<dbReference type="KEGG" id="ocg:OCA5_c23170"/>
<dbReference type="PATRIC" id="fig|504832.7.peg.2442"/>
<dbReference type="eggNOG" id="COG0199">
    <property type="taxonomic scope" value="Bacteria"/>
</dbReference>
<dbReference type="HOGENOM" id="CLU_139869_0_1_5"/>
<dbReference type="OrthoDB" id="9810484at2"/>
<dbReference type="Proteomes" id="UP000007730">
    <property type="component" value="Chromosome"/>
</dbReference>
<dbReference type="GO" id="GO:0005737">
    <property type="term" value="C:cytoplasm"/>
    <property type="evidence" value="ECO:0007669"/>
    <property type="project" value="UniProtKB-ARBA"/>
</dbReference>
<dbReference type="GO" id="GO:0015935">
    <property type="term" value="C:small ribosomal subunit"/>
    <property type="evidence" value="ECO:0007669"/>
    <property type="project" value="TreeGrafter"/>
</dbReference>
<dbReference type="GO" id="GO:0019843">
    <property type="term" value="F:rRNA binding"/>
    <property type="evidence" value="ECO:0007669"/>
    <property type="project" value="UniProtKB-UniRule"/>
</dbReference>
<dbReference type="GO" id="GO:0003735">
    <property type="term" value="F:structural constituent of ribosome"/>
    <property type="evidence" value="ECO:0007669"/>
    <property type="project" value="InterPro"/>
</dbReference>
<dbReference type="GO" id="GO:0006412">
    <property type="term" value="P:translation"/>
    <property type="evidence" value="ECO:0007669"/>
    <property type="project" value="UniProtKB-UniRule"/>
</dbReference>
<dbReference type="FunFam" id="1.10.287.1480:FF:000001">
    <property type="entry name" value="30S ribosomal protein S14"/>
    <property type="match status" value="1"/>
</dbReference>
<dbReference type="Gene3D" id="1.10.287.1480">
    <property type="match status" value="1"/>
</dbReference>
<dbReference type="HAMAP" id="MF_00537">
    <property type="entry name" value="Ribosomal_uS14_1"/>
    <property type="match status" value="1"/>
</dbReference>
<dbReference type="InterPro" id="IPR001209">
    <property type="entry name" value="Ribosomal_uS14"/>
</dbReference>
<dbReference type="InterPro" id="IPR023036">
    <property type="entry name" value="Ribosomal_uS14_bac/plastid"/>
</dbReference>
<dbReference type="NCBIfam" id="NF006477">
    <property type="entry name" value="PRK08881.1"/>
    <property type="match status" value="1"/>
</dbReference>
<dbReference type="PANTHER" id="PTHR19836">
    <property type="entry name" value="30S RIBOSOMAL PROTEIN S14"/>
    <property type="match status" value="1"/>
</dbReference>
<dbReference type="PANTHER" id="PTHR19836:SF19">
    <property type="entry name" value="SMALL RIBOSOMAL SUBUNIT PROTEIN US14M"/>
    <property type="match status" value="1"/>
</dbReference>
<dbReference type="Pfam" id="PF00253">
    <property type="entry name" value="Ribosomal_S14"/>
    <property type="match status" value="1"/>
</dbReference>
<dbReference type="SUPFAM" id="SSF57716">
    <property type="entry name" value="Glucocorticoid receptor-like (DNA-binding domain)"/>
    <property type="match status" value="1"/>
</dbReference>
<accession>B6JEX8</accession>
<accession>F8BZB4</accession>
<evidence type="ECO:0000255" key="1">
    <source>
        <dbReference type="HAMAP-Rule" id="MF_00537"/>
    </source>
</evidence>
<evidence type="ECO:0000256" key="2">
    <source>
        <dbReference type="SAM" id="MobiDB-lite"/>
    </source>
</evidence>
<evidence type="ECO:0000305" key="3"/>
<proteinExistence type="inferred from homology"/>